<sequence length="290" mass="33050">MSISNYRLQTRVRLQPLVLFQIIAAYERRPKTAKMAVGTLLGRRDRCNDIIEITNSYTVQHKEQQIGDMEQFKLDTQYASEMFELNQVTYPQEKIIGWYCTGKTLSRSAAALHGYYSRECGDMQPLHLLVDTSLRGGRLTTRLYCAVTMGVPGGTRGLLFTLLPLLKVNAEGDEAVALRLMQKQALHPTKQLGRMLPELVHVMEATRELEQKLDLVMRYINDVLTRKRRPDNSIGRALHDALTSVPLLDADSFRAMFNANVRNMLMSITLSSMIKTQMELSEKLSYLPDH</sequence>
<organism>
    <name type="scientific">Drosophila mojavensis</name>
    <name type="common">Fruit fly</name>
    <dbReference type="NCBI Taxonomy" id="7230"/>
    <lineage>
        <taxon>Eukaryota</taxon>
        <taxon>Metazoa</taxon>
        <taxon>Ecdysozoa</taxon>
        <taxon>Arthropoda</taxon>
        <taxon>Hexapoda</taxon>
        <taxon>Insecta</taxon>
        <taxon>Pterygota</taxon>
        <taxon>Neoptera</taxon>
        <taxon>Endopterygota</taxon>
        <taxon>Diptera</taxon>
        <taxon>Brachycera</taxon>
        <taxon>Muscomorpha</taxon>
        <taxon>Ephydroidea</taxon>
        <taxon>Drosophilidae</taxon>
        <taxon>Drosophila</taxon>
    </lineage>
</organism>
<accession>B4KSC0</accession>
<proteinExistence type="inferred from homology"/>
<name>EI3F2_DROMO</name>
<dbReference type="EMBL" id="CH933808">
    <property type="protein sequence ID" value="EDW08402.1"/>
    <property type="molecule type" value="Genomic_DNA"/>
</dbReference>
<dbReference type="SMR" id="B4KSC0"/>
<dbReference type="FunCoup" id="B4KSC0">
    <property type="interactions" value="381"/>
</dbReference>
<dbReference type="EnsemblMetazoa" id="FBtr0170675">
    <property type="protein sequence ID" value="FBpp0169167"/>
    <property type="gene ID" value="FBgn0142687"/>
</dbReference>
<dbReference type="EnsemblMetazoa" id="XM_002004431.4">
    <property type="protein sequence ID" value="XP_002004467.1"/>
    <property type="gene ID" value="LOC6578557"/>
</dbReference>
<dbReference type="GeneID" id="6578557"/>
<dbReference type="KEGG" id="dmo:Dmoj_GI19950"/>
<dbReference type="CTD" id="35547"/>
<dbReference type="eggNOG" id="KOG2975">
    <property type="taxonomic scope" value="Eukaryota"/>
</dbReference>
<dbReference type="HOGENOM" id="CLU_027018_0_2_1"/>
<dbReference type="InParanoid" id="B4KSC0"/>
<dbReference type="OMA" id="IEITNCF"/>
<dbReference type="OrthoDB" id="25498at2759"/>
<dbReference type="PhylomeDB" id="B4KSC0"/>
<dbReference type="Proteomes" id="UP000009192">
    <property type="component" value="Unassembled WGS sequence"/>
</dbReference>
<dbReference type="GO" id="GO:0016282">
    <property type="term" value="C:eukaryotic 43S preinitiation complex"/>
    <property type="evidence" value="ECO:0007669"/>
    <property type="project" value="UniProtKB-UniRule"/>
</dbReference>
<dbReference type="GO" id="GO:0033290">
    <property type="term" value="C:eukaryotic 48S preinitiation complex"/>
    <property type="evidence" value="ECO:0007669"/>
    <property type="project" value="UniProtKB-UniRule"/>
</dbReference>
<dbReference type="GO" id="GO:0071541">
    <property type="term" value="C:eukaryotic translation initiation factor 3 complex, eIF3m"/>
    <property type="evidence" value="ECO:0007669"/>
    <property type="project" value="TreeGrafter"/>
</dbReference>
<dbReference type="GO" id="GO:0008237">
    <property type="term" value="F:metallopeptidase activity"/>
    <property type="evidence" value="ECO:0007669"/>
    <property type="project" value="InterPro"/>
</dbReference>
<dbReference type="GO" id="GO:0003743">
    <property type="term" value="F:translation initiation factor activity"/>
    <property type="evidence" value="ECO:0007669"/>
    <property type="project" value="UniProtKB-UniRule"/>
</dbReference>
<dbReference type="GO" id="GO:0031369">
    <property type="term" value="F:translation initiation factor binding"/>
    <property type="evidence" value="ECO:0007669"/>
    <property type="project" value="InterPro"/>
</dbReference>
<dbReference type="GO" id="GO:0001732">
    <property type="term" value="P:formation of cytoplasmic translation initiation complex"/>
    <property type="evidence" value="ECO:0007669"/>
    <property type="project" value="UniProtKB-UniRule"/>
</dbReference>
<dbReference type="CDD" id="cd08064">
    <property type="entry name" value="MPN_eIF3f"/>
    <property type="match status" value="1"/>
</dbReference>
<dbReference type="Gene3D" id="3.40.140.10">
    <property type="entry name" value="Cytidine Deaminase, domain 2"/>
    <property type="match status" value="1"/>
</dbReference>
<dbReference type="HAMAP" id="MF_03005">
    <property type="entry name" value="eIF3f"/>
    <property type="match status" value="1"/>
</dbReference>
<dbReference type="InterPro" id="IPR027531">
    <property type="entry name" value="eIF3f"/>
</dbReference>
<dbReference type="InterPro" id="IPR024969">
    <property type="entry name" value="EIF3F/CSN6-like_C"/>
</dbReference>
<dbReference type="InterPro" id="IPR000555">
    <property type="entry name" value="JAMM/MPN+_dom"/>
</dbReference>
<dbReference type="InterPro" id="IPR037518">
    <property type="entry name" value="MPN"/>
</dbReference>
<dbReference type="PANTHER" id="PTHR10540:SF6">
    <property type="entry name" value="EUKARYOTIC TRANSLATION INITIATION FACTOR 3 SUBUNIT F"/>
    <property type="match status" value="1"/>
</dbReference>
<dbReference type="PANTHER" id="PTHR10540">
    <property type="entry name" value="EUKARYOTIC TRANSLATION INITIATION FACTOR 3 SUBUNIT F-RELATED"/>
    <property type="match status" value="1"/>
</dbReference>
<dbReference type="Pfam" id="PF01398">
    <property type="entry name" value="JAB"/>
    <property type="match status" value="1"/>
</dbReference>
<dbReference type="Pfam" id="PF13012">
    <property type="entry name" value="MitMem_reg"/>
    <property type="match status" value="1"/>
</dbReference>
<dbReference type="SMART" id="SM00232">
    <property type="entry name" value="JAB_MPN"/>
    <property type="match status" value="1"/>
</dbReference>
<dbReference type="PROSITE" id="PS50249">
    <property type="entry name" value="MPN"/>
    <property type="match status" value="1"/>
</dbReference>
<gene>
    <name evidence="1" type="primary">eIF3f2</name>
    <name evidence="1" type="synonym">eIF3-S5-2</name>
    <name type="ORF">GI19950</name>
</gene>
<comment type="function">
    <text evidence="1">Component of the eukaryotic translation initiation factor 3 (eIF-3) complex, which is involved in protein synthesis of a specialized repertoire of mRNAs and, together with other initiation factors, stimulates binding of mRNA and methionyl-tRNAi to the 40S ribosome. The eIF-3 complex specifically targets and initiates translation of a subset of mRNAs involved in cell proliferation.</text>
</comment>
<comment type="subunit">
    <text evidence="1">Component of the eukaryotic translation initiation factor 3 (eIF-3) complex. The eIF-3 complex interacts with pix.</text>
</comment>
<comment type="subcellular location">
    <subcellularLocation>
        <location evidence="1">Cytoplasm</location>
    </subcellularLocation>
</comment>
<comment type="similarity">
    <text evidence="1">Belongs to the eIF-3 subunit F family.</text>
</comment>
<evidence type="ECO:0000255" key="1">
    <source>
        <dbReference type="HAMAP-Rule" id="MF_03005"/>
    </source>
</evidence>
<evidence type="ECO:0000255" key="2">
    <source>
        <dbReference type="PROSITE-ProRule" id="PRU01182"/>
    </source>
</evidence>
<feature type="chain" id="PRO_0000364306" description="Eukaryotic translation initiation factor 3 subunit F-2">
    <location>
        <begin position="1"/>
        <end position="290"/>
    </location>
</feature>
<feature type="domain" description="MPN" evidence="2">
    <location>
        <begin position="12"/>
        <end position="150"/>
    </location>
</feature>
<reference key="1">
    <citation type="journal article" date="2007" name="Nature">
        <title>Evolution of genes and genomes on the Drosophila phylogeny.</title>
        <authorList>
            <consortium name="Drosophila 12 genomes consortium"/>
        </authorList>
    </citation>
    <scope>NUCLEOTIDE SEQUENCE [LARGE SCALE GENOMIC DNA]</scope>
    <source>
        <strain>Tucson 15081-1352.22</strain>
    </source>
</reference>
<keyword id="KW-0963">Cytoplasm</keyword>
<keyword id="KW-0396">Initiation factor</keyword>
<keyword id="KW-0648">Protein biosynthesis</keyword>
<keyword id="KW-1185">Reference proteome</keyword>
<protein>
    <recommendedName>
        <fullName evidence="1">Eukaryotic translation initiation factor 3 subunit F-2</fullName>
        <shortName evidence="1">eIF3f-2</shortName>
    </recommendedName>
    <alternativeName>
        <fullName evidence="1">Eukaryotic translation initiation factor 3 subunit 5-2</fullName>
    </alternativeName>
</protein>